<sequence>MASNDTPAFANNEIMLKCEGLTRIYREGPQDVTVLDALELDVRAGERVAVVGSSGSGKTTLLNLLGGLDRPSAGEVRIAGQSLAEMGEAALGSFRNRHIGFVYQFHHLLAEFSALENVAMPLLIRGQTRQEAQARAREILAKVGMEARGEHKPGELSGGERQRVAIARALVTDPSLVLMDEPTGNLDQTTAGHILALMDGLAAQSACAFIIVTHDPGLAAHQDRVMRLDQGRLSEDA</sequence>
<protein>
    <recommendedName>
        <fullName evidence="1">Lipoprotein-releasing system ATP-binding protein LolD</fullName>
        <ecNumber evidence="1">7.6.2.-</ecNumber>
    </recommendedName>
</protein>
<proteinExistence type="inferred from homology"/>
<accession>Q1QX72</accession>
<reference key="1">
    <citation type="journal article" date="2011" name="Stand. Genomic Sci.">
        <title>Complete genome sequence of the halophilic and highly halotolerant Chromohalobacter salexigens type strain (1H11(T)).</title>
        <authorList>
            <person name="Copeland A."/>
            <person name="O'Connor K."/>
            <person name="Lucas S."/>
            <person name="Lapidus A."/>
            <person name="Berry K.W."/>
            <person name="Detter J.C."/>
            <person name="Del Rio T.G."/>
            <person name="Hammon N."/>
            <person name="Dalin E."/>
            <person name="Tice H."/>
            <person name="Pitluck S."/>
            <person name="Bruce D."/>
            <person name="Goodwin L."/>
            <person name="Han C."/>
            <person name="Tapia R."/>
            <person name="Saunders E."/>
            <person name="Schmutz J."/>
            <person name="Brettin T."/>
            <person name="Larimer F."/>
            <person name="Land M."/>
            <person name="Hauser L."/>
            <person name="Vargas C."/>
            <person name="Nieto J.J."/>
            <person name="Kyrpides N.C."/>
            <person name="Ivanova N."/>
            <person name="Goker M."/>
            <person name="Klenk H.P."/>
            <person name="Csonka L.N."/>
            <person name="Woyke T."/>
        </authorList>
    </citation>
    <scope>NUCLEOTIDE SEQUENCE [LARGE SCALE GENOMIC DNA]</scope>
    <source>
        <strain>ATCC BAA-138 / DSM 3043 / CIP 106854 / NCIMB 13768 / 1H11</strain>
    </source>
</reference>
<name>LOLD_CHRSD</name>
<feature type="chain" id="PRO_0000272071" description="Lipoprotein-releasing system ATP-binding protein LolD">
    <location>
        <begin position="1"/>
        <end position="237"/>
    </location>
</feature>
<feature type="domain" description="ABC transporter" evidence="1">
    <location>
        <begin position="16"/>
        <end position="237"/>
    </location>
</feature>
<feature type="binding site" evidence="1">
    <location>
        <begin position="52"/>
        <end position="59"/>
    </location>
    <ligand>
        <name>ATP</name>
        <dbReference type="ChEBI" id="CHEBI:30616"/>
    </ligand>
</feature>
<organism>
    <name type="scientific">Chromohalobacter salexigens (strain ATCC BAA-138 / DSM 3043 / CIP 106854 / NCIMB 13768 / 1H11)</name>
    <dbReference type="NCBI Taxonomy" id="290398"/>
    <lineage>
        <taxon>Bacteria</taxon>
        <taxon>Pseudomonadati</taxon>
        <taxon>Pseudomonadota</taxon>
        <taxon>Gammaproteobacteria</taxon>
        <taxon>Oceanospirillales</taxon>
        <taxon>Halomonadaceae</taxon>
        <taxon>Chromohalobacter</taxon>
    </lineage>
</organism>
<evidence type="ECO:0000255" key="1">
    <source>
        <dbReference type="HAMAP-Rule" id="MF_01708"/>
    </source>
</evidence>
<evidence type="ECO:0000305" key="2"/>
<dbReference type="EC" id="7.6.2.-" evidence="1"/>
<dbReference type="EMBL" id="CP000285">
    <property type="protein sequence ID" value="ABE58936.1"/>
    <property type="status" value="ALT_INIT"/>
    <property type="molecule type" value="Genomic_DNA"/>
</dbReference>
<dbReference type="RefSeq" id="WP_043558215.1">
    <property type="nucleotide sequence ID" value="NC_007963.1"/>
</dbReference>
<dbReference type="SMR" id="Q1QX72"/>
<dbReference type="STRING" id="290398.Csal_1583"/>
<dbReference type="GeneID" id="95334314"/>
<dbReference type="KEGG" id="csa:Csal_1583"/>
<dbReference type="eggNOG" id="COG1136">
    <property type="taxonomic scope" value="Bacteria"/>
</dbReference>
<dbReference type="HOGENOM" id="CLU_000604_1_22_6"/>
<dbReference type="Proteomes" id="UP000000239">
    <property type="component" value="Chromosome"/>
</dbReference>
<dbReference type="GO" id="GO:0005886">
    <property type="term" value="C:plasma membrane"/>
    <property type="evidence" value="ECO:0007669"/>
    <property type="project" value="UniProtKB-SubCell"/>
</dbReference>
<dbReference type="GO" id="GO:0005524">
    <property type="term" value="F:ATP binding"/>
    <property type="evidence" value="ECO:0007669"/>
    <property type="project" value="UniProtKB-KW"/>
</dbReference>
<dbReference type="GO" id="GO:0016887">
    <property type="term" value="F:ATP hydrolysis activity"/>
    <property type="evidence" value="ECO:0007669"/>
    <property type="project" value="InterPro"/>
</dbReference>
<dbReference type="GO" id="GO:0022857">
    <property type="term" value="F:transmembrane transporter activity"/>
    <property type="evidence" value="ECO:0007669"/>
    <property type="project" value="TreeGrafter"/>
</dbReference>
<dbReference type="GO" id="GO:0044874">
    <property type="term" value="P:lipoprotein localization to outer membrane"/>
    <property type="evidence" value="ECO:0007669"/>
    <property type="project" value="TreeGrafter"/>
</dbReference>
<dbReference type="GO" id="GO:0089705">
    <property type="term" value="P:protein localization to outer membrane"/>
    <property type="evidence" value="ECO:0007669"/>
    <property type="project" value="TreeGrafter"/>
</dbReference>
<dbReference type="CDD" id="cd03255">
    <property type="entry name" value="ABC_MJ0796_LolCDE_FtsE"/>
    <property type="match status" value="1"/>
</dbReference>
<dbReference type="FunFam" id="3.40.50.300:FF:000230">
    <property type="entry name" value="Lipoprotein-releasing system ATP-binding protein LolD"/>
    <property type="match status" value="1"/>
</dbReference>
<dbReference type="Gene3D" id="3.40.50.300">
    <property type="entry name" value="P-loop containing nucleotide triphosphate hydrolases"/>
    <property type="match status" value="1"/>
</dbReference>
<dbReference type="InterPro" id="IPR003593">
    <property type="entry name" value="AAA+_ATPase"/>
</dbReference>
<dbReference type="InterPro" id="IPR003439">
    <property type="entry name" value="ABC_transporter-like_ATP-bd"/>
</dbReference>
<dbReference type="InterPro" id="IPR017871">
    <property type="entry name" value="ABC_transporter-like_CS"/>
</dbReference>
<dbReference type="InterPro" id="IPR015854">
    <property type="entry name" value="ABC_transpr_LolD-like"/>
</dbReference>
<dbReference type="InterPro" id="IPR017911">
    <property type="entry name" value="MacB-like_ATP-bd"/>
</dbReference>
<dbReference type="InterPro" id="IPR027417">
    <property type="entry name" value="P-loop_NTPase"/>
</dbReference>
<dbReference type="PANTHER" id="PTHR24220">
    <property type="entry name" value="IMPORT ATP-BINDING PROTEIN"/>
    <property type="match status" value="1"/>
</dbReference>
<dbReference type="PANTHER" id="PTHR24220:SF689">
    <property type="entry name" value="LIPOPROTEIN-RELEASING SYSTEM ATP-BINDING PROTEIN LOLD"/>
    <property type="match status" value="1"/>
</dbReference>
<dbReference type="Pfam" id="PF00005">
    <property type="entry name" value="ABC_tran"/>
    <property type="match status" value="1"/>
</dbReference>
<dbReference type="SMART" id="SM00382">
    <property type="entry name" value="AAA"/>
    <property type="match status" value="1"/>
</dbReference>
<dbReference type="SUPFAM" id="SSF52540">
    <property type="entry name" value="P-loop containing nucleoside triphosphate hydrolases"/>
    <property type="match status" value="1"/>
</dbReference>
<dbReference type="PROSITE" id="PS00211">
    <property type="entry name" value="ABC_TRANSPORTER_1"/>
    <property type="match status" value="1"/>
</dbReference>
<dbReference type="PROSITE" id="PS50893">
    <property type="entry name" value="ABC_TRANSPORTER_2"/>
    <property type="match status" value="1"/>
</dbReference>
<dbReference type="PROSITE" id="PS51244">
    <property type="entry name" value="LOLD"/>
    <property type="match status" value="1"/>
</dbReference>
<keyword id="KW-0067">ATP-binding</keyword>
<keyword id="KW-0997">Cell inner membrane</keyword>
<keyword id="KW-1003">Cell membrane</keyword>
<keyword id="KW-0472">Membrane</keyword>
<keyword id="KW-0547">Nucleotide-binding</keyword>
<keyword id="KW-1185">Reference proteome</keyword>
<keyword id="KW-1278">Translocase</keyword>
<keyword id="KW-0813">Transport</keyword>
<gene>
    <name evidence="1" type="primary">lolD</name>
    <name type="ordered locus">Csal_1583</name>
</gene>
<comment type="function">
    <text evidence="1">Part of the ABC transporter complex LolCDE involved in the translocation of mature outer membrane-directed lipoproteins, from the inner membrane to the periplasmic chaperone, LolA. Responsible for the formation of the LolA-lipoprotein complex in an ATP-dependent manner.</text>
</comment>
<comment type="subunit">
    <text evidence="1">The complex is composed of two ATP-binding proteins (LolD) and two transmembrane proteins (LolC and LolE).</text>
</comment>
<comment type="subcellular location">
    <subcellularLocation>
        <location evidence="1">Cell inner membrane</location>
        <topology evidence="1">Peripheral membrane protein</topology>
    </subcellularLocation>
</comment>
<comment type="similarity">
    <text evidence="1">Belongs to the ABC transporter superfamily. Lipoprotein translocase (TC 3.A.1.125) family.</text>
</comment>
<comment type="sequence caution" evidence="2">
    <conflict type="erroneous initiation">
        <sequence resource="EMBL-CDS" id="ABE58936"/>
    </conflict>
</comment>